<name>MYB94_ARATH</name>
<accession>Q9SN78</accession>
<accession>Q9ZTC1</accession>
<keyword id="KW-0010">Activator</keyword>
<keyword id="KW-0238">DNA-binding</keyword>
<keyword id="KW-0539">Nucleus</keyword>
<keyword id="KW-1185">Reference proteome</keyword>
<keyword id="KW-0677">Repeat</keyword>
<keyword id="KW-0346">Stress response</keyword>
<keyword id="KW-0804">Transcription</keyword>
<keyword id="KW-0805">Transcription regulation</keyword>
<protein>
    <recommendedName>
        <fullName evidence="5">Transcription factor MYB94</fullName>
    </recommendedName>
    <alternativeName>
        <fullName evidence="5">Myb-related protein 94</fullName>
        <shortName evidence="5">AtMYB94</shortName>
    </alternativeName>
</protein>
<sequence>MGRPPCCDKIGVKKGPWTPEEDIILVSYIQEHGPGNWRSVPTHTGLRRCSKSCRLRWTNYLRPGIKRGNFTEHEEKMILHLQALLGNRWAAIASYLPERTDNDIKNYWNTHLKKKLKKMNDSCDSTINNGLDNKDFSISNKNTTSHQSSNSSKGQWERRLQTDINMAKQALCDALSIDKPQNPTNFSIPDLGYGPSSSSSSTTTTTTTTRNTNPYPSGVYASSAENIARLLQNFMKDTPKTSVPLPVAATEMAITTAASSPSTTEGDGEGIDHSLFSFNSIDEAEEKPKLIDHDINGLITQGSLSLFEKWLFDEQSHDMIINNMSLEGQEVLF</sequence>
<evidence type="ECO:0000255" key="1">
    <source>
        <dbReference type="PROSITE-ProRule" id="PRU00625"/>
    </source>
</evidence>
<evidence type="ECO:0000256" key="2">
    <source>
        <dbReference type="SAM" id="MobiDB-lite"/>
    </source>
</evidence>
<evidence type="ECO:0000269" key="3">
    <source>
    </source>
</evidence>
<evidence type="ECO:0000269" key="4">
    <source>
    </source>
</evidence>
<evidence type="ECO:0000303" key="5">
    <source>
    </source>
</evidence>
<evidence type="ECO:0000305" key="6"/>
<evidence type="ECO:0000312" key="7">
    <source>
        <dbReference type="Araport" id="AT3G47600"/>
    </source>
</evidence>
<evidence type="ECO:0000312" key="8">
    <source>
        <dbReference type="EMBL" id="CAB61986.1"/>
    </source>
</evidence>
<dbReference type="EMBL" id="AF062918">
    <property type="protein sequence ID" value="AAC83640.1"/>
    <property type="molecule type" value="mRNA"/>
</dbReference>
<dbReference type="EMBL" id="AY519595">
    <property type="protein sequence ID" value="AAS10065.1"/>
    <property type="molecule type" value="mRNA"/>
</dbReference>
<dbReference type="EMBL" id="AL132955">
    <property type="protein sequence ID" value="CAB61986.1"/>
    <property type="molecule type" value="Genomic_DNA"/>
</dbReference>
<dbReference type="EMBL" id="CP002686">
    <property type="protein sequence ID" value="AEE78306.1"/>
    <property type="molecule type" value="Genomic_DNA"/>
</dbReference>
<dbReference type="EMBL" id="BT002802">
    <property type="protein sequence ID" value="AAO22626.1"/>
    <property type="molecule type" value="mRNA"/>
</dbReference>
<dbReference type="EMBL" id="BT004361">
    <property type="protein sequence ID" value="AAO42355.1"/>
    <property type="molecule type" value="mRNA"/>
</dbReference>
<dbReference type="PIR" id="T45720">
    <property type="entry name" value="T45720"/>
</dbReference>
<dbReference type="RefSeq" id="NP_190344.1">
    <property type="nucleotide sequence ID" value="NM_114628.4"/>
</dbReference>
<dbReference type="SMR" id="Q9SN78"/>
<dbReference type="FunCoup" id="Q9SN78">
    <property type="interactions" value="211"/>
</dbReference>
<dbReference type="IntAct" id="Q9SN78">
    <property type="interactions" value="5"/>
</dbReference>
<dbReference type="STRING" id="3702.Q9SN78"/>
<dbReference type="PaxDb" id="3702-AT3G47600.1"/>
<dbReference type="ProteomicsDB" id="251374"/>
<dbReference type="EnsemblPlants" id="AT3G47600.1">
    <property type="protein sequence ID" value="AT3G47600.1"/>
    <property type="gene ID" value="AT3G47600"/>
</dbReference>
<dbReference type="GeneID" id="823914"/>
<dbReference type="Gramene" id="AT3G47600.1">
    <property type="protein sequence ID" value="AT3G47600.1"/>
    <property type="gene ID" value="AT3G47600"/>
</dbReference>
<dbReference type="KEGG" id="ath:AT3G47600"/>
<dbReference type="Araport" id="AT3G47600"/>
<dbReference type="TAIR" id="AT3G47600">
    <property type="gene designation" value="MYB94"/>
</dbReference>
<dbReference type="eggNOG" id="KOG0048">
    <property type="taxonomic scope" value="Eukaryota"/>
</dbReference>
<dbReference type="HOGENOM" id="CLU_028567_6_0_1"/>
<dbReference type="InParanoid" id="Q9SN78"/>
<dbReference type="OMA" id="TQHEEKM"/>
<dbReference type="PhylomeDB" id="Q9SN78"/>
<dbReference type="PRO" id="PR:Q9SN78"/>
<dbReference type="Proteomes" id="UP000006548">
    <property type="component" value="Chromosome 3"/>
</dbReference>
<dbReference type="ExpressionAtlas" id="Q9SN78">
    <property type="expression patterns" value="baseline and differential"/>
</dbReference>
<dbReference type="GO" id="GO:0005634">
    <property type="term" value="C:nucleus"/>
    <property type="evidence" value="ECO:0000314"/>
    <property type="project" value="UniProtKB"/>
</dbReference>
<dbReference type="GO" id="GO:0003700">
    <property type="term" value="F:DNA-binding transcription factor activity"/>
    <property type="evidence" value="ECO:0000250"/>
    <property type="project" value="TAIR"/>
</dbReference>
<dbReference type="GO" id="GO:0043565">
    <property type="term" value="F:sequence-specific DNA binding"/>
    <property type="evidence" value="ECO:0000314"/>
    <property type="project" value="UniProtKB"/>
</dbReference>
<dbReference type="GO" id="GO:0000976">
    <property type="term" value="F:transcription cis-regulatory region binding"/>
    <property type="evidence" value="ECO:0000353"/>
    <property type="project" value="TAIR"/>
</dbReference>
<dbReference type="GO" id="GO:0045893">
    <property type="term" value="P:positive regulation of DNA-templated transcription"/>
    <property type="evidence" value="ECO:0000315"/>
    <property type="project" value="UniProtKB"/>
</dbReference>
<dbReference type="GO" id="GO:1904278">
    <property type="term" value="P:positive regulation of wax biosynthetic process"/>
    <property type="evidence" value="ECO:0000315"/>
    <property type="project" value="UniProtKB"/>
</dbReference>
<dbReference type="GO" id="GO:0006355">
    <property type="term" value="P:regulation of DNA-templated transcription"/>
    <property type="evidence" value="ECO:0000304"/>
    <property type="project" value="TAIR"/>
</dbReference>
<dbReference type="GO" id="GO:0009414">
    <property type="term" value="P:response to water deprivation"/>
    <property type="evidence" value="ECO:0000315"/>
    <property type="project" value="UniProtKB"/>
</dbReference>
<dbReference type="CDD" id="cd00167">
    <property type="entry name" value="SANT"/>
    <property type="match status" value="2"/>
</dbReference>
<dbReference type="FunFam" id="1.10.10.60:FF:000001">
    <property type="entry name" value="MYB-related transcription factor"/>
    <property type="match status" value="1"/>
</dbReference>
<dbReference type="FunFam" id="1.10.10.60:FF:000445">
    <property type="entry name" value="Transcription factor MYB96"/>
    <property type="match status" value="1"/>
</dbReference>
<dbReference type="Gene3D" id="1.10.10.60">
    <property type="entry name" value="Homeodomain-like"/>
    <property type="match status" value="2"/>
</dbReference>
<dbReference type="InterPro" id="IPR009057">
    <property type="entry name" value="Homeodomain-like_sf"/>
</dbReference>
<dbReference type="InterPro" id="IPR017930">
    <property type="entry name" value="Myb_dom"/>
</dbReference>
<dbReference type="InterPro" id="IPR015495">
    <property type="entry name" value="Myb_TF_plants"/>
</dbReference>
<dbReference type="InterPro" id="IPR001005">
    <property type="entry name" value="SANT/Myb"/>
</dbReference>
<dbReference type="PANTHER" id="PTHR10641">
    <property type="entry name" value="MYB FAMILY TRANSCRIPTION FACTOR"/>
    <property type="match status" value="1"/>
</dbReference>
<dbReference type="PANTHER" id="PTHR10641:SF1392">
    <property type="entry name" value="TRANSCRIPTION FACTOR MYB94"/>
    <property type="match status" value="1"/>
</dbReference>
<dbReference type="Pfam" id="PF00249">
    <property type="entry name" value="Myb_DNA-binding"/>
    <property type="match status" value="2"/>
</dbReference>
<dbReference type="SMART" id="SM00717">
    <property type="entry name" value="SANT"/>
    <property type="match status" value="2"/>
</dbReference>
<dbReference type="SUPFAM" id="SSF46689">
    <property type="entry name" value="Homeodomain-like"/>
    <property type="match status" value="1"/>
</dbReference>
<dbReference type="PROSITE" id="PS51294">
    <property type="entry name" value="HTH_MYB"/>
    <property type="match status" value="2"/>
</dbReference>
<organism>
    <name type="scientific">Arabidopsis thaliana</name>
    <name type="common">Mouse-ear cress</name>
    <dbReference type="NCBI Taxonomy" id="3702"/>
    <lineage>
        <taxon>Eukaryota</taxon>
        <taxon>Viridiplantae</taxon>
        <taxon>Streptophyta</taxon>
        <taxon>Embryophyta</taxon>
        <taxon>Tracheophyta</taxon>
        <taxon>Spermatophyta</taxon>
        <taxon>Magnoliopsida</taxon>
        <taxon>eudicotyledons</taxon>
        <taxon>Gunneridae</taxon>
        <taxon>Pentapetalae</taxon>
        <taxon>rosids</taxon>
        <taxon>malvids</taxon>
        <taxon>Brassicales</taxon>
        <taxon>Brassicaceae</taxon>
        <taxon>Camelineae</taxon>
        <taxon>Arabidopsis</taxon>
    </lineage>
</organism>
<reference key="1">
    <citation type="journal article" date="1998" name="Plant J.">
        <title>Towards functional characterisation of the members of the R2R3-MYB gene family from Arabidopsis thaliana.</title>
        <authorList>
            <person name="Kranz H.D."/>
            <person name="Denekamp M."/>
            <person name="Greco R."/>
            <person name="Jin H.-L."/>
            <person name="Leyva A."/>
            <person name="Meissner R.C."/>
            <person name="Petroni K."/>
            <person name="Urzainqui A."/>
            <person name="Bevan M."/>
            <person name="Martin C."/>
            <person name="Smeekens S."/>
            <person name="Tonelli C."/>
            <person name="Paz-Ares J."/>
            <person name="Weisshaar B."/>
        </authorList>
    </citation>
    <scope>NUCLEOTIDE SEQUENCE [MRNA]</scope>
    <scope>NOMENCLATURE</scope>
    <source>
        <strain>cv. Columbia</strain>
    </source>
</reference>
<reference key="2">
    <citation type="submission" date="2004-01" db="EMBL/GenBank/DDBJ databases">
        <title>The MYB transcription factor family in Arabidopsis: A genome-wide cloning and expression pattern analysis.</title>
        <authorList>
            <person name="Qu L."/>
            <person name="Gu H."/>
        </authorList>
    </citation>
    <scope>NUCLEOTIDE SEQUENCE [MRNA]</scope>
</reference>
<reference key="3">
    <citation type="journal article" date="2000" name="Nature">
        <title>Sequence and analysis of chromosome 3 of the plant Arabidopsis thaliana.</title>
        <authorList>
            <person name="Salanoubat M."/>
            <person name="Lemcke K."/>
            <person name="Rieger M."/>
            <person name="Ansorge W."/>
            <person name="Unseld M."/>
            <person name="Fartmann B."/>
            <person name="Valle G."/>
            <person name="Bloecker H."/>
            <person name="Perez-Alonso M."/>
            <person name="Obermaier B."/>
            <person name="Delseny M."/>
            <person name="Boutry M."/>
            <person name="Grivell L.A."/>
            <person name="Mache R."/>
            <person name="Puigdomenech P."/>
            <person name="De Simone V."/>
            <person name="Choisne N."/>
            <person name="Artiguenave F."/>
            <person name="Robert C."/>
            <person name="Brottier P."/>
            <person name="Wincker P."/>
            <person name="Cattolico L."/>
            <person name="Weissenbach J."/>
            <person name="Saurin W."/>
            <person name="Quetier F."/>
            <person name="Schaefer M."/>
            <person name="Mueller-Auer S."/>
            <person name="Gabel C."/>
            <person name="Fuchs M."/>
            <person name="Benes V."/>
            <person name="Wurmbach E."/>
            <person name="Drzonek H."/>
            <person name="Erfle H."/>
            <person name="Jordan N."/>
            <person name="Bangert S."/>
            <person name="Wiedelmann R."/>
            <person name="Kranz H."/>
            <person name="Voss H."/>
            <person name="Holland R."/>
            <person name="Brandt P."/>
            <person name="Nyakatura G."/>
            <person name="Vezzi A."/>
            <person name="D'Angelo M."/>
            <person name="Pallavicini A."/>
            <person name="Toppo S."/>
            <person name="Simionati B."/>
            <person name="Conrad A."/>
            <person name="Hornischer K."/>
            <person name="Kauer G."/>
            <person name="Loehnert T.-H."/>
            <person name="Nordsiek G."/>
            <person name="Reichelt J."/>
            <person name="Scharfe M."/>
            <person name="Schoen O."/>
            <person name="Bargues M."/>
            <person name="Terol J."/>
            <person name="Climent J."/>
            <person name="Navarro P."/>
            <person name="Collado C."/>
            <person name="Perez-Perez A."/>
            <person name="Ottenwaelder B."/>
            <person name="Duchemin D."/>
            <person name="Cooke R."/>
            <person name="Laudie M."/>
            <person name="Berger-Llauro C."/>
            <person name="Purnelle B."/>
            <person name="Masuy D."/>
            <person name="de Haan M."/>
            <person name="Maarse A.C."/>
            <person name="Alcaraz J.-P."/>
            <person name="Cottet A."/>
            <person name="Casacuberta E."/>
            <person name="Monfort A."/>
            <person name="Argiriou A."/>
            <person name="Flores M."/>
            <person name="Liguori R."/>
            <person name="Vitale D."/>
            <person name="Mannhaupt G."/>
            <person name="Haase D."/>
            <person name="Schoof H."/>
            <person name="Rudd S."/>
            <person name="Zaccaria P."/>
            <person name="Mewes H.-W."/>
            <person name="Mayer K.F.X."/>
            <person name="Kaul S."/>
            <person name="Town C.D."/>
            <person name="Koo H.L."/>
            <person name="Tallon L.J."/>
            <person name="Jenkins J."/>
            <person name="Rooney T."/>
            <person name="Rizzo M."/>
            <person name="Walts A."/>
            <person name="Utterback T."/>
            <person name="Fujii C.Y."/>
            <person name="Shea T.P."/>
            <person name="Creasy T.H."/>
            <person name="Haas B."/>
            <person name="Maiti R."/>
            <person name="Wu D."/>
            <person name="Peterson J."/>
            <person name="Van Aken S."/>
            <person name="Pai G."/>
            <person name="Militscher J."/>
            <person name="Sellers P."/>
            <person name="Gill J.E."/>
            <person name="Feldblyum T.V."/>
            <person name="Preuss D."/>
            <person name="Lin X."/>
            <person name="Nierman W.C."/>
            <person name="Salzberg S.L."/>
            <person name="White O."/>
            <person name="Venter J.C."/>
            <person name="Fraser C.M."/>
            <person name="Kaneko T."/>
            <person name="Nakamura Y."/>
            <person name="Sato S."/>
            <person name="Kato T."/>
            <person name="Asamizu E."/>
            <person name="Sasamoto S."/>
            <person name="Kimura T."/>
            <person name="Idesawa K."/>
            <person name="Kawashima K."/>
            <person name="Kishida Y."/>
            <person name="Kiyokawa C."/>
            <person name="Kohara M."/>
            <person name="Matsumoto M."/>
            <person name="Matsuno A."/>
            <person name="Muraki A."/>
            <person name="Nakayama S."/>
            <person name="Nakazaki N."/>
            <person name="Shinpo S."/>
            <person name="Takeuchi C."/>
            <person name="Wada T."/>
            <person name="Watanabe A."/>
            <person name="Yamada M."/>
            <person name="Yasuda M."/>
            <person name="Tabata S."/>
        </authorList>
    </citation>
    <scope>NUCLEOTIDE SEQUENCE [LARGE SCALE GENOMIC DNA]</scope>
    <source>
        <strain>cv. Columbia</strain>
    </source>
</reference>
<reference key="4">
    <citation type="journal article" date="2017" name="Plant J.">
        <title>Araport11: a complete reannotation of the Arabidopsis thaliana reference genome.</title>
        <authorList>
            <person name="Cheng C.Y."/>
            <person name="Krishnakumar V."/>
            <person name="Chan A.P."/>
            <person name="Thibaud-Nissen F."/>
            <person name="Schobel S."/>
            <person name="Town C.D."/>
        </authorList>
    </citation>
    <scope>GENOME REANNOTATION</scope>
    <source>
        <strain>cv. Columbia</strain>
    </source>
</reference>
<reference key="5">
    <citation type="journal article" date="2003" name="Science">
        <title>Empirical analysis of transcriptional activity in the Arabidopsis genome.</title>
        <authorList>
            <person name="Yamada K."/>
            <person name="Lim J."/>
            <person name="Dale J.M."/>
            <person name="Chen H."/>
            <person name="Shinn P."/>
            <person name="Palm C.J."/>
            <person name="Southwick A.M."/>
            <person name="Wu H.C."/>
            <person name="Kim C.J."/>
            <person name="Nguyen M."/>
            <person name="Pham P.K."/>
            <person name="Cheuk R.F."/>
            <person name="Karlin-Newmann G."/>
            <person name="Liu S.X."/>
            <person name="Lam B."/>
            <person name="Sakano H."/>
            <person name="Wu T."/>
            <person name="Yu G."/>
            <person name="Miranda M."/>
            <person name="Quach H.L."/>
            <person name="Tripp M."/>
            <person name="Chang C.H."/>
            <person name="Lee J.M."/>
            <person name="Toriumi M.J."/>
            <person name="Chan M.M."/>
            <person name="Tang C.C."/>
            <person name="Onodera C.S."/>
            <person name="Deng J.M."/>
            <person name="Akiyama K."/>
            <person name="Ansari Y."/>
            <person name="Arakawa T."/>
            <person name="Banh J."/>
            <person name="Banno F."/>
            <person name="Bowser L."/>
            <person name="Brooks S.Y."/>
            <person name="Carninci P."/>
            <person name="Chao Q."/>
            <person name="Choy N."/>
            <person name="Enju A."/>
            <person name="Goldsmith A.D."/>
            <person name="Gurjal M."/>
            <person name="Hansen N.F."/>
            <person name="Hayashizaki Y."/>
            <person name="Johnson-Hopson C."/>
            <person name="Hsuan V.W."/>
            <person name="Iida K."/>
            <person name="Karnes M."/>
            <person name="Khan S."/>
            <person name="Koesema E."/>
            <person name="Ishida J."/>
            <person name="Jiang P.X."/>
            <person name="Jones T."/>
            <person name="Kawai J."/>
            <person name="Kamiya A."/>
            <person name="Meyers C."/>
            <person name="Nakajima M."/>
            <person name="Narusaka M."/>
            <person name="Seki M."/>
            <person name="Sakurai T."/>
            <person name="Satou M."/>
            <person name="Tamse R."/>
            <person name="Vaysberg M."/>
            <person name="Wallender E.K."/>
            <person name="Wong C."/>
            <person name="Yamamura Y."/>
            <person name="Yuan S."/>
            <person name="Shinozaki K."/>
            <person name="Davis R.W."/>
            <person name="Theologis A."/>
            <person name="Ecker J.R."/>
        </authorList>
    </citation>
    <scope>NUCLEOTIDE SEQUENCE [LARGE SCALE MRNA]</scope>
    <source>
        <strain>cv. Columbia</strain>
    </source>
</reference>
<reference key="6">
    <citation type="journal article" date="2015" name="Plant Cell Physiol.">
        <title>Cuticular wax biosynthesis is up-regulated by the MYB94 transcription factor in Arabidopsis.</title>
        <authorList>
            <person name="Lee S.B."/>
            <person name="Suh M.C."/>
        </authorList>
    </citation>
    <scope>FUNCTION</scope>
    <scope>SUBCELLULAR LOCATION</scope>
    <scope>TISSUE SPECIFICITY</scope>
    <scope>INDUCTION</scope>
</reference>
<reference key="7">
    <citation type="journal article" date="2016" name="Plant Cell Physiol.">
        <title>MYB94 and MYB96 additively activate cuticular wax biosynthesis in Arabidopsis.</title>
        <authorList>
            <person name="Lee S.B."/>
            <person name="Kim H.U."/>
            <person name="Suh M.C."/>
        </authorList>
    </citation>
    <scope>FUNCTION</scope>
</reference>
<gene>
    <name evidence="5" type="primary">MYB94</name>
    <name type="synonym">ATMYBCP70</name>
    <name evidence="7" type="ordered locus">At3g47600</name>
    <name evidence="8" type="ORF">F1P2.150</name>
</gene>
<feature type="chain" id="PRO_0000442918" description="Transcription factor MYB94">
    <location>
        <begin position="1"/>
        <end position="333"/>
    </location>
</feature>
<feature type="domain" description="HTH myb-type 1" evidence="1">
    <location>
        <begin position="9"/>
        <end position="65"/>
    </location>
</feature>
<feature type="domain" description="HTH myb-type 2" evidence="1">
    <location>
        <begin position="66"/>
        <end position="116"/>
    </location>
</feature>
<feature type="DNA-binding region" description="H-T-H motif" evidence="1">
    <location>
        <begin position="37"/>
        <end position="61"/>
    </location>
</feature>
<feature type="DNA-binding region" description="H-T-H motif" evidence="1">
    <location>
        <begin position="89"/>
        <end position="112"/>
    </location>
</feature>
<feature type="region of interest" description="Disordered" evidence="2">
    <location>
        <begin position="134"/>
        <end position="157"/>
    </location>
</feature>
<feature type="region of interest" description="Disordered" evidence="2">
    <location>
        <begin position="183"/>
        <end position="218"/>
    </location>
</feature>
<feature type="compositionally biased region" description="Polar residues" evidence="2">
    <location>
        <begin position="134"/>
        <end position="154"/>
    </location>
</feature>
<feature type="compositionally biased region" description="Low complexity" evidence="2">
    <location>
        <begin position="196"/>
        <end position="209"/>
    </location>
</feature>
<feature type="sequence conflict" description="In Ref. 1; AAC83640." evidence="6" ref="1">
    <original>S</original>
    <variation>STT</variation>
    <location>
        <position position="201"/>
    </location>
</feature>
<proteinExistence type="evidence at protein level"/>
<comment type="function">
    <text evidence="3 4">Transcription activator involved in the activation of cuticular wax biosynthesis under drought stress. Binds directly to the promoters of genes involved in cuticular wax biosynthesis. Transactivates WSD1, KCS2/DAISY, CER1, CER2, FAR3 and ECR genes (PubMed:25305760, PubMed:27577115). Functions together with MYB96 in the activation of cuticular wax biosynthesis (PubMed:27577115).</text>
</comment>
<comment type="interaction">
    <interactant intactId="EBI-4429731">
        <id>Q9SN78</id>
    </interactant>
    <interactant intactId="EBI-15200578">
        <id>Q9LXY8</id>
        <label>T5P19_170</label>
    </interactant>
    <organismsDiffer>false</organismsDiffer>
    <experiments>3</experiments>
</comment>
<comment type="subcellular location">
    <subcellularLocation>
        <location evidence="1 3">Nucleus</location>
    </subcellularLocation>
</comment>
<comment type="tissue specificity">
    <text evidence="3">Expressed in germinating seeds, rosette and cauline leaves, flower buds, open flowers, stems and developing siliques.</text>
</comment>
<comment type="induction">
    <text evidence="3">Induced by salt stress, osmotic shock and abscisic acid (ABA).</text>
</comment>
<comment type="miscellaneous">
    <text evidence="3">Plants overexpressing MYB94 exhibit deposition of epicuticuar wax crystals on leaf surface.</text>
</comment>